<evidence type="ECO:0000250" key="1"/>
<evidence type="ECO:0000250" key="2">
    <source>
        <dbReference type="UniProtKB" id="P23921"/>
    </source>
</evidence>
<evidence type="ECO:0000255" key="3">
    <source>
        <dbReference type="PROSITE-ProRule" id="PRU00492"/>
    </source>
</evidence>
<evidence type="ECO:0000305" key="4"/>
<gene>
    <name type="primary">RNR1</name>
</gene>
<keyword id="KW-0021">Allosteric enzyme</keyword>
<keyword id="KW-0067">ATP-binding</keyword>
<keyword id="KW-0215">Deoxyribonucleotide synthesis</keyword>
<keyword id="KW-1015">Disulfide bond</keyword>
<keyword id="KW-0547">Nucleotide-binding</keyword>
<keyword id="KW-0560">Oxidoreductase</keyword>
<name>RIR1_CRYPV</name>
<proteinExistence type="inferred from homology"/>
<feature type="chain" id="PRO_0000187196" description="Ribonucleoside-diphosphate reductase large chain">
    <location>
        <begin position="1"/>
        <end position="803"/>
    </location>
</feature>
<feature type="domain" description="ATP-cone" evidence="3">
    <location>
        <begin position="1"/>
        <end position="91"/>
    </location>
</feature>
<feature type="active site" description="Proton acceptor" evidence="1">
    <location>
        <position position="425"/>
    </location>
</feature>
<feature type="active site" description="Cysteine radical intermediate" evidence="1">
    <location>
        <position position="427"/>
    </location>
</feature>
<feature type="active site" description="Proton acceptor" evidence="1">
    <location>
        <position position="429"/>
    </location>
</feature>
<feature type="binding site" evidence="2">
    <location>
        <begin position="5"/>
        <end position="6"/>
    </location>
    <ligand>
        <name>ATP</name>
        <dbReference type="ChEBI" id="CHEBI:30616"/>
        <note>allosteric activator</note>
    </ligand>
</feature>
<feature type="binding site" evidence="2">
    <location>
        <begin position="11"/>
        <end position="17"/>
    </location>
    <ligand>
        <name>ATP</name>
        <dbReference type="ChEBI" id="CHEBI:30616"/>
        <note>allosteric activator</note>
    </ligand>
</feature>
<feature type="binding site" evidence="2">
    <location>
        <position position="52"/>
    </location>
    <ligand>
        <name>ATP</name>
        <dbReference type="ChEBI" id="CHEBI:30616"/>
        <note>allosteric activator</note>
    </ligand>
</feature>
<feature type="binding site" evidence="2">
    <location>
        <position position="56"/>
    </location>
    <ligand>
        <name>ATP</name>
        <dbReference type="ChEBI" id="CHEBI:30616"/>
        <note>allosteric activator</note>
    </ligand>
</feature>
<feature type="binding site" evidence="2">
    <location>
        <position position="215"/>
    </location>
    <ligand>
        <name>GDP</name>
        <dbReference type="ChEBI" id="CHEBI:58189"/>
    </ligand>
</feature>
<feature type="binding site" evidence="2">
    <location>
        <begin position="224"/>
        <end position="226"/>
    </location>
    <ligand>
        <name>dTTP</name>
        <dbReference type="ChEBI" id="CHEBI:37568"/>
        <note>allosteric effector that controls substrate specificity</note>
    </ligand>
</feature>
<feature type="binding site" evidence="2">
    <location>
        <position position="241"/>
    </location>
    <ligand>
        <name>dTTP</name>
        <dbReference type="ChEBI" id="CHEBI:37568"/>
        <note>allosteric effector that controls substrate specificity</note>
    </ligand>
</feature>
<feature type="binding site" evidence="2">
    <location>
        <position position="254"/>
    </location>
    <ligand>
        <name>dTTP</name>
        <dbReference type="ChEBI" id="CHEBI:37568"/>
        <note>allosteric effector that controls substrate specificity</note>
    </ligand>
</feature>
<feature type="binding site" evidence="2">
    <location>
        <begin position="261"/>
        <end position="262"/>
    </location>
    <ligand>
        <name>dTTP</name>
        <dbReference type="ChEBI" id="CHEBI:37568"/>
        <note>allosteric effector that controls substrate specificity</note>
    </ligand>
</feature>
<feature type="binding site" evidence="2">
    <location>
        <position position="425"/>
    </location>
    <ligand>
        <name>GDP</name>
        <dbReference type="ChEBI" id="CHEBI:58189"/>
    </ligand>
</feature>
<feature type="binding site" evidence="2">
    <location>
        <position position="429"/>
    </location>
    <ligand>
        <name>GDP</name>
        <dbReference type="ChEBI" id="CHEBI:58189"/>
    </ligand>
</feature>
<feature type="binding site" evidence="2">
    <location>
        <begin position="604"/>
        <end position="607"/>
    </location>
    <ligand>
        <name>GDP</name>
        <dbReference type="ChEBI" id="CHEBI:58189"/>
    </ligand>
</feature>
<feature type="site" description="Important for hydrogen atom transfer" evidence="1">
    <location>
        <position position="216"/>
    </location>
</feature>
<feature type="site" description="Important for hydrogen atom transfer" evidence="1">
    <location>
        <position position="442"/>
    </location>
</feature>
<feature type="site" description="Important for electron transfer" evidence="1">
    <location>
        <position position="737"/>
    </location>
</feature>
<feature type="site" description="Important for electron transfer" evidence="1">
    <location>
        <position position="738"/>
    </location>
</feature>
<feature type="site" description="Interacts with thioredoxin/glutaredoxin" evidence="1">
    <location>
        <position position="798"/>
    </location>
</feature>
<feature type="site" description="Interacts with thioredoxin/glutaredoxin" evidence="1">
    <location>
        <position position="801"/>
    </location>
</feature>
<feature type="disulfide bond" description="Redox-active" evidence="1">
    <location>
        <begin position="216"/>
        <end position="442"/>
    </location>
</feature>
<comment type="function">
    <text>Provides the precursors necessary for DNA synthesis. Catalyzes the biosynthesis of deoxyribonucleotides from the corresponding ribonucleotides.</text>
</comment>
<comment type="catalytic activity">
    <reaction>
        <text>a 2'-deoxyribonucleoside 5'-diphosphate + [thioredoxin]-disulfide + H2O = a ribonucleoside 5'-diphosphate + [thioredoxin]-dithiol</text>
        <dbReference type="Rhea" id="RHEA:23252"/>
        <dbReference type="Rhea" id="RHEA-COMP:10698"/>
        <dbReference type="Rhea" id="RHEA-COMP:10700"/>
        <dbReference type="ChEBI" id="CHEBI:15377"/>
        <dbReference type="ChEBI" id="CHEBI:29950"/>
        <dbReference type="ChEBI" id="CHEBI:50058"/>
        <dbReference type="ChEBI" id="CHEBI:57930"/>
        <dbReference type="ChEBI" id="CHEBI:73316"/>
        <dbReference type="EC" id="1.17.4.1"/>
    </reaction>
</comment>
<comment type="activity regulation">
    <text evidence="1">Under complex allosteric control mediated by deoxynucleoside triphosphates and ATP binding to separate specificity and activation sites on the large subunit. The type of nucleotide bound at the specificity site determines substrate preference. It seems probable that ATP makes the enzyme reduce CDP and UDP, dGTP favors ADP reduction and dTTP favors GDP reduction. Stimulated by ATP and inhibited by dATP binding to the activity site (By similarity).</text>
</comment>
<comment type="subunit">
    <text>Heterodimer of a large and a small subunit.</text>
</comment>
<comment type="similarity">
    <text evidence="4">Belongs to the ribonucleoside diphosphate reductase large chain family.</text>
</comment>
<reference key="1">
    <citation type="journal article" date="2002" name="DNA Seq.">
        <title>Molecular characterization of ribonucleotide reductase from Cryptosporidium parvum.</title>
        <authorList>
            <person name="Akiyoshi D.E."/>
            <person name="Balakrishnan R."/>
            <person name="Huettinger C."/>
            <person name="Widmer G."/>
            <person name="Tzipori S."/>
        </authorList>
    </citation>
    <scope>NUCLEOTIDE SEQUENCE [GENOMIC DNA]</scope>
    <source>
        <strain>GCH1</strain>
    </source>
</reference>
<protein>
    <recommendedName>
        <fullName>Ribonucleoside-diphosphate reductase large chain</fullName>
        <ecNumber>1.17.4.1</ecNumber>
    </recommendedName>
    <alternativeName>
        <fullName>Ribonucleotide reductase R1 subunit</fullName>
    </alternativeName>
</protein>
<accession>O61065</accession>
<organism>
    <name type="scientific">Cryptosporidium parvum</name>
    <dbReference type="NCBI Taxonomy" id="5807"/>
    <lineage>
        <taxon>Eukaryota</taxon>
        <taxon>Sar</taxon>
        <taxon>Alveolata</taxon>
        <taxon>Apicomplexa</taxon>
        <taxon>Conoidasida</taxon>
        <taxon>Coccidia</taxon>
        <taxon>Eucoccidiorida</taxon>
        <taxon>Eimeriorina</taxon>
        <taxon>Cryptosporidiidae</taxon>
        <taxon>Cryptosporidium</taxon>
    </lineage>
</organism>
<dbReference type="EC" id="1.17.4.1"/>
<dbReference type="EMBL" id="AF043243">
    <property type="protein sequence ID" value="AAC12280.2"/>
    <property type="molecule type" value="Genomic_DNA"/>
</dbReference>
<dbReference type="SMR" id="O61065"/>
<dbReference type="VEuPathDB" id="CryptoDB:cgd6_1950"/>
<dbReference type="VEuPathDB" id="CryptoDB:CPATCC_0013460"/>
<dbReference type="GO" id="GO:0005971">
    <property type="term" value="C:ribonucleoside-diphosphate reductase complex"/>
    <property type="evidence" value="ECO:0007669"/>
    <property type="project" value="TreeGrafter"/>
</dbReference>
<dbReference type="GO" id="GO:0005524">
    <property type="term" value="F:ATP binding"/>
    <property type="evidence" value="ECO:0007669"/>
    <property type="project" value="UniProtKB-KW"/>
</dbReference>
<dbReference type="GO" id="GO:0004748">
    <property type="term" value="F:ribonucleoside-diphosphate reductase activity, thioredoxin disulfide as acceptor"/>
    <property type="evidence" value="ECO:0000250"/>
    <property type="project" value="UniProtKB"/>
</dbReference>
<dbReference type="GO" id="GO:0009263">
    <property type="term" value="P:deoxyribonucleotide biosynthetic process"/>
    <property type="evidence" value="ECO:0000250"/>
    <property type="project" value="UniProtKB"/>
</dbReference>
<dbReference type="CDD" id="cd01679">
    <property type="entry name" value="RNR_I"/>
    <property type="match status" value="1"/>
</dbReference>
<dbReference type="FunFam" id="3.20.70.20:FF:000010">
    <property type="entry name" value="Ribonucleoside-diphosphate reductase"/>
    <property type="match status" value="1"/>
</dbReference>
<dbReference type="Gene3D" id="3.20.70.20">
    <property type="match status" value="1"/>
</dbReference>
<dbReference type="InterPro" id="IPR005144">
    <property type="entry name" value="ATP-cone_dom"/>
</dbReference>
<dbReference type="InterPro" id="IPR013346">
    <property type="entry name" value="NrdE_NrdA_C"/>
</dbReference>
<dbReference type="InterPro" id="IPR000788">
    <property type="entry name" value="RNR_lg_C"/>
</dbReference>
<dbReference type="InterPro" id="IPR013509">
    <property type="entry name" value="RNR_lsu_N"/>
</dbReference>
<dbReference type="InterPro" id="IPR008926">
    <property type="entry name" value="RNR_R1-su_N"/>
</dbReference>
<dbReference type="InterPro" id="IPR039718">
    <property type="entry name" value="Rrm1"/>
</dbReference>
<dbReference type="NCBIfam" id="TIGR02506">
    <property type="entry name" value="NrdE_NrdA"/>
    <property type="match status" value="1"/>
</dbReference>
<dbReference type="PANTHER" id="PTHR11573">
    <property type="entry name" value="RIBONUCLEOSIDE-DIPHOSPHATE REDUCTASE LARGE CHAIN"/>
    <property type="match status" value="1"/>
</dbReference>
<dbReference type="PANTHER" id="PTHR11573:SF6">
    <property type="entry name" value="RIBONUCLEOSIDE-DIPHOSPHATE REDUCTASE LARGE SUBUNIT"/>
    <property type="match status" value="1"/>
</dbReference>
<dbReference type="Pfam" id="PF03477">
    <property type="entry name" value="ATP-cone"/>
    <property type="match status" value="1"/>
</dbReference>
<dbReference type="Pfam" id="PF02867">
    <property type="entry name" value="Ribonuc_red_lgC"/>
    <property type="match status" value="1"/>
</dbReference>
<dbReference type="Pfam" id="PF00317">
    <property type="entry name" value="Ribonuc_red_lgN"/>
    <property type="match status" value="1"/>
</dbReference>
<dbReference type="PRINTS" id="PR01183">
    <property type="entry name" value="RIBORDTASEM1"/>
</dbReference>
<dbReference type="SUPFAM" id="SSF51998">
    <property type="entry name" value="PFL-like glycyl radical enzymes"/>
    <property type="match status" value="1"/>
</dbReference>
<dbReference type="SUPFAM" id="SSF48168">
    <property type="entry name" value="R1 subunit of ribonucleotide reductase, N-terminal domain"/>
    <property type="match status" value="1"/>
</dbReference>
<dbReference type="PROSITE" id="PS51161">
    <property type="entry name" value="ATP_CONE"/>
    <property type="match status" value="1"/>
</dbReference>
<dbReference type="PROSITE" id="PS00089">
    <property type="entry name" value="RIBORED_LARGE"/>
    <property type="match status" value="1"/>
</dbReference>
<sequence length="803" mass="91123">MYVVNRKGEEEPVSFDQILSRITKLSYGLHPLVDPARVTQAVINGLYSGIKTSELDELASQTCAYMAATHNDFSKLAARISTSNLHKNTSSDIGDVASQLYNFKDNQGCPAPLISKPVYDFIMENRERINSKIDFSKDFEYDYFAFKTLERSYLLKIDNKVVERPQHLLMRVSCGIHCGDIEAALETYELLSQKYFTHATPTLFNSGTPRPQMSSCFLLRIPEDSINGIFDTLTKCANISKTAGGLGVAVSNIRGTGSYIRGTNGRSNGLIPMLRVYNDTARYIDQGGGKRKGAIAIYLEPWHVDVVEFIEIRKNHGKEEMRCRDLFPALWVPDLFMERVEKDQDWTLMCPDECRGLQDVWGDDFKKLYEEYEKQGRGRKTMKAQKLWFLILQAQIETGTPFICYKDAANSKSNQKNLGTIVSSNLCTEIIEYTSTDEVAVCNLASIGLPKFVDKNNKTFDFDKLKEVTKVITRNLNKLIDVGYYSLKECKKSNLRHRPLGIGIQGLADCFMMLRMPYESEGAKKLNKQIFEVIYYAALDASCELAEKYGPYETYSGSPASKGILQFDMWGVTPDSGLCDWDLLKDRISKHGIRNSLLISPMPTASTSQILGNNESFEPFTSNIYHRRVLSGEFFVVNPHLLNDLLELGLWDDRLKQNIIANNGSIQNILTIPEDIRELYKTVWEIKQKTVIDMAADRGPYVCQSQSLNIHMENANFAKLSSMHFYGWKKGLKTGIYYLRTQSATRPIQFTVDQQLLKSETKEKDSLETNKRQALEPEAQKLIACPLRPTNMKDDEECMMCSG</sequence>